<feature type="chain" id="PRO_0000188928" description="tRNA modification GTPase MnmE">
    <location>
        <begin position="1"/>
        <end position="455"/>
    </location>
</feature>
<feature type="domain" description="TrmE-type G">
    <location>
        <begin position="221"/>
        <end position="375"/>
    </location>
</feature>
<feature type="binding site" evidence="1">
    <location>
        <position position="25"/>
    </location>
    <ligand>
        <name>(6S)-5-formyl-5,6,7,8-tetrahydrofolate</name>
        <dbReference type="ChEBI" id="CHEBI:57457"/>
    </ligand>
</feature>
<feature type="binding site" evidence="1">
    <location>
        <position position="85"/>
    </location>
    <ligand>
        <name>(6S)-5-formyl-5,6,7,8-tetrahydrofolate</name>
        <dbReference type="ChEBI" id="CHEBI:57457"/>
    </ligand>
</feature>
<feature type="binding site" evidence="1">
    <location>
        <position position="124"/>
    </location>
    <ligand>
        <name>(6S)-5-formyl-5,6,7,8-tetrahydrofolate</name>
        <dbReference type="ChEBI" id="CHEBI:57457"/>
    </ligand>
</feature>
<feature type="binding site" evidence="1">
    <location>
        <begin position="231"/>
        <end position="236"/>
    </location>
    <ligand>
        <name>GTP</name>
        <dbReference type="ChEBI" id="CHEBI:37565"/>
    </ligand>
</feature>
<feature type="binding site" evidence="1">
    <location>
        <position position="231"/>
    </location>
    <ligand>
        <name>K(+)</name>
        <dbReference type="ChEBI" id="CHEBI:29103"/>
    </ligand>
</feature>
<feature type="binding site" evidence="1">
    <location>
        <position position="235"/>
    </location>
    <ligand>
        <name>Mg(2+)</name>
        <dbReference type="ChEBI" id="CHEBI:18420"/>
    </ligand>
</feature>
<feature type="binding site" evidence="1">
    <location>
        <begin position="250"/>
        <end position="256"/>
    </location>
    <ligand>
        <name>GTP</name>
        <dbReference type="ChEBI" id="CHEBI:37565"/>
    </ligand>
</feature>
<feature type="binding site" evidence="1">
    <location>
        <position position="250"/>
    </location>
    <ligand>
        <name>K(+)</name>
        <dbReference type="ChEBI" id="CHEBI:29103"/>
    </ligand>
</feature>
<feature type="binding site" evidence="1">
    <location>
        <position position="252"/>
    </location>
    <ligand>
        <name>K(+)</name>
        <dbReference type="ChEBI" id="CHEBI:29103"/>
    </ligand>
</feature>
<feature type="binding site" evidence="1">
    <location>
        <position position="255"/>
    </location>
    <ligand>
        <name>K(+)</name>
        <dbReference type="ChEBI" id="CHEBI:29103"/>
    </ligand>
</feature>
<feature type="binding site" evidence="1">
    <location>
        <position position="256"/>
    </location>
    <ligand>
        <name>Mg(2+)</name>
        <dbReference type="ChEBI" id="CHEBI:18420"/>
    </ligand>
</feature>
<feature type="binding site" evidence="1">
    <location>
        <begin position="275"/>
        <end position="278"/>
    </location>
    <ligand>
        <name>GTP</name>
        <dbReference type="ChEBI" id="CHEBI:37565"/>
    </ligand>
</feature>
<feature type="binding site" evidence="1">
    <location>
        <position position="455"/>
    </location>
    <ligand>
        <name>(6S)-5-formyl-5,6,7,8-tetrahydrofolate</name>
        <dbReference type="ChEBI" id="CHEBI:57457"/>
    </ligand>
</feature>
<name>MNME_STRMU</name>
<gene>
    <name evidence="1" type="primary">mnmE</name>
    <name evidence="1" type="synonym">thdF</name>
    <name evidence="1" type="synonym">trmE</name>
    <name type="ordered locus">SMU_1235</name>
</gene>
<proteinExistence type="inferred from homology"/>
<keyword id="KW-0963">Cytoplasm</keyword>
<keyword id="KW-0342">GTP-binding</keyword>
<keyword id="KW-0378">Hydrolase</keyword>
<keyword id="KW-0460">Magnesium</keyword>
<keyword id="KW-0479">Metal-binding</keyword>
<keyword id="KW-0547">Nucleotide-binding</keyword>
<keyword id="KW-0630">Potassium</keyword>
<keyword id="KW-1185">Reference proteome</keyword>
<keyword id="KW-0819">tRNA processing</keyword>
<organism>
    <name type="scientific">Streptococcus mutans serotype c (strain ATCC 700610 / UA159)</name>
    <dbReference type="NCBI Taxonomy" id="210007"/>
    <lineage>
        <taxon>Bacteria</taxon>
        <taxon>Bacillati</taxon>
        <taxon>Bacillota</taxon>
        <taxon>Bacilli</taxon>
        <taxon>Lactobacillales</taxon>
        <taxon>Streptococcaceae</taxon>
        <taxon>Streptococcus</taxon>
    </lineage>
</organism>
<sequence>MITNEFDTITAIATPLGEGAIGIVRISGSKALAIIKKIFKGKNLDDVPSHTINYGHIVENGAIIDEVMVSVMRAPKTFTREDVIEINTHGGVAVTNEILQLVLRSGARMADPGEFTKRAFLNGRVDLAQAEAVMDLIRAKTDKAMAVAVQQLDGSLSNLINNTRQEILNTLAQVEVNIDYPEYDDVEEMTTALMREKTQEFETLLTNLLKTARRGKILREGLSTAIIGRPNVGKSSLLNNLLREEKAIVTDIEGTTRDVIEEYVNIKGVPLKLIDTAGIRETDDLVEKIGVERSKKALEEADLVLLVLNSAEKLTDQDRTLLEISQNSNRLILLNKTDLPEQIETDQLPEDCIKISVIKNQNIDVIEERINKLFFDNAAIVEKDATYLSNARHISLIEKALKSLQAVNDGLELGMPVDLLQVDMTRTWEILGEITGDAAPDELITQLFSQFCLGK</sequence>
<evidence type="ECO:0000255" key="1">
    <source>
        <dbReference type="HAMAP-Rule" id="MF_00379"/>
    </source>
</evidence>
<accession>Q8DTT8</accession>
<comment type="function">
    <text evidence="1">Exhibits a very high intrinsic GTPase hydrolysis rate. Involved in the addition of a carboxymethylaminomethyl (cmnm) group at the wobble position (U34) of certain tRNAs, forming tRNA-cmnm(5)s(2)U34.</text>
</comment>
<comment type="cofactor">
    <cofactor evidence="1">
        <name>K(+)</name>
        <dbReference type="ChEBI" id="CHEBI:29103"/>
    </cofactor>
    <text evidence="1">Binds 1 potassium ion per subunit.</text>
</comment>
<comment type="subunit">
    <text evidence="1">Homodimer. Heterotetramer of two MnmE and two MnmG subunits.</text>
</comment>
<comment type="subcellular location">
    <subcellularLocation>
        <location evidence="1">Cytoplasm</location>
    </subcellularLocation>
</comment>
<comment type="similarity">
    <text evidence="1">Belongs to the TRAFAC class TrmE-Era-EngA-EngB-Septin-like GTPase superfamily. TrmE GTPase family.</text>
</comment>
<dbReference type="EC" id="3.6.-.-" evidence="1"/>
<dbReference type="EMBL" id="AE014133">
    <property type="protein sequence ID" value="AAN58920.1"/>
    <property type="molecule type" value="Genomic_DNA"/>
</dbReference>
<dbReference type="RefSeq" id="NP_721614.1">
    <property type="nucleotide sequence ID" value="NC_004350.2"/>
</dbReference>
<dbReference type="RefSeq" id="WP_002264096.1">
    <property type="nucleotide sequence ID" value="NC_004350.2"/>
</dbReference>
<dbReference type="SMR" id="Q8DTT8"/>
<dbReference type="STRING" id="210007.SMU_1235"/>
<dbReference type="GeneID" id="93859285"/>
<dbReference type="KEGG" id="smu:SMU_1235"/>
<dbReference type="PATRIC" id="fig|210007.7.peg.1108"/>
<dbReference type="eggNOG" id="COG0486">
    <property type="taxonomic scope" value="Bacteria"/>
</dbReference>
<dbReference type="HOGENOM" id="CLU_019624_4_1_9"/>
<dbReference type="OrthoDB" id="9805918at2"/>
<dbReference type="PhylomeDB" id="Q8DTT8"/>
<dbReference type="Proteomes" id="UP000002512">
    <property type="component" value="Chromosome"/>
</dbReference>
<dbReference type="GO" id="GO:0005829">
    <property type="term" value="C:cytosol"/>
    <property type="evidence" value="ECO:0007669"/>
    <property type="project" value="TreeGrafter"/>
</dbReference>
<dbReference type="GO" id="GO:0005525">
    <property type="term" value="F:GTP binding"/>
    <property type="evidence" value="ECO:0007669"/>
    <property type="project" value="UniProtKB-UniRule"/>
</dbReference>
<dbReference type="GO" id="GO:0003924">
    <property type="term" value="F:GTPase activity"/>
    <property type="evidence" value="ECO:0007669"/>
    <property type="project" value="UniProtKB-UniRule"/>
</dbReference>
<dbReference type="GO" id="GO:0046872">
    <property type="term" value="F:metal ion binding"/>
    <property type="evidence" value="ECO:0007669"/>
    <property type="project" value="UniProtKB-KW"/>
</dbReference>
<dbReference type="GO" id="GO:0030488">
    <property type="term" value="P:tRNA methylation"/>
    <property type="evidence" value="ECO:0007669"/>
    <property type="project" value="TreeGrafter"/>
</dbReference>
<dbReference type="GO" id="GO:0002098">
    <property type="term" value="P:tRNA wobble uridine modification"/>
    <property type="evidence" value="ECO:0007669"/>
    <property type="project" value="TreeGrafter"/>
</dbReference>
<dbReference type="CDD" id="cd04164">
    <property type="entry name" value="trmE"/>
    <property type="match status" value="1"/>
</dbReference>
<dbReference type="CDD" id="cd14858">
    <property type="entry name" value="TrmE_N"/>
    <property type="match status" value="1"/>
</dbReference>
<dbReference type="FunFam" id="3.30.1360.120:FF:000003">
    <property type="entry name" value="tRNA modification GTPase MnmE"/>
    <property type="match status" value="1"/>
</dbReference>
<dbReference type="FunFam" id="3.40.50.300:FF:000494">
    <property type="entry name" value="tRNA modification GTPase MnmE"/>
    <property type="match status" value="1"/>
</dbReference>
<dbReference type="Gene3D" id="3.40.50.300">
    <property type="entry name" value="P-loop containing nucleotide triphosphate hydrolases"/>
    <property type="match status" value="1"/>
</dbReference>
<dbReference type="Gene3D" id="3.30.1360.120">
    <property type="entry name" value="Probable tRNA modification gtpase trme, domain 1"/>
    <property type="match status" value="1"/>
</dbReference>
<dbReference type="Gene3D" id="1.20.120.430">
    <property type="entry name" value="tRNA modification GTPase MnmE domain 2"/>
    <property type="match status" value="1"/>
</dbReference>
<dbReference type="HAMAP" id="MF_00379">
    <property type="entry name" value="GTPase_MnmE"/>
    <property type="match status" value="1"/>
</dbReference>
<dbReference type="InterPro" id="IPR031168">
    <property type="entry name" value="G_TrmE"/>
</dbReference>
<dbReference type="InterPro" id="IPR006073">
    <property type="entry name" value="GTP-bd"/>
</dbReference>
<dbReference type="InterPro" id="IPR018948">
    <property type="entry name" value="GTP-bd_TrmE_N"/>
</dbReference>
<dbReference type="InterPro" id="IPR004520">
    <property type="entry name" value="GTPase_MnmE"/>
</dbReference>
<dbReference type="InterPro" id="IPR027368">
    <property type="entry name" value="MnmE_dom2"/>
</dbReference>
<dbReference type="InterPro" id="IPR025867">
    <property type="entry name" value="MnmE_helical"/>
</dbReference>
<dbReference type="InterPro" id="IPR027417">
    <property type="entry name" value="P-loop_NTPase"/>
</dbReference>
<dbReference type="InterPro" id="IPR005225">
    <property type="entry name" value="Small_GTP-bd"/>
</dbReference>
<dbReference type="InterPro" id="IPR027266">
    <property type="entry name" value="TrmE/GcvT_dom1"/>
</dbReference>
<dbReference type="NCBIfam" id="TIGR00450">
    <property type="entry name" value="mnmE_trmE_thdF"/>
    <property type="match status" value="1"/>
</dbReference>
<dbReference type="NCBIfam" id="NF003661">
    <property type="entry name" value="PRK05291.1-3"/>
    <property type="match status" value="1"/>
</dbReference>
<dbReference type="NCBIfam" id="TIGR00231">
    <property type="entry name" value="small_GTP"/>
    <property type="match status" value="1"/>
</dbReference>
<dbReference type="PANTHER" id="PTHR42714">
    <property type="entry name" value="TRNA MODIFICATION GTPASE GTPBP3"/>
    <property type="match status" value="1"/>
</dbReference>
<dbReference type="PANTHER" id="PTHR42714:SF2">
    <property type="entry name" value="TRNA MODIFICATION GTPASE GTPBP3, MITOCHONDRIAL"/>
    <property type="match status" value="1"/>
</dbReference>
<dbReference type="Pfam" id="PF01926">
    <property type="entry name" value="MMR_HSR1"/>
    <property type="match status" value="1"/>
</dbReference>
<dbReference type="Pfam" id="PF12631">
    <property type="entry name" value="MnmE_helical"/>
    <property type="match status" value="1"/>
</dbReference>
<dbReference type="Pfam" id="PF10396">
    <property type="entry name" value="TrmE_N"/>
    <property type="match status" value="1"/>
</dbReference>
<dbReference type="SUPFAM" id="SSF52540">
    <property type="entry name" value="P-loop containing nucleoside triphosphate hydrolases"/>
    <property type="match status" value="1"/>
</dbReference>
<dbReference type="SUPFAM" id="SSF116878">
    <property type="entry name" value="TrmE connector domain"/>
    <property type="match status" value="1"/>
</dbReference>
<dbReference type="PROSITE" id="PS51709">
    <property type="entry name" value="G_TRME"/>
    <property type="match status" value="1"/>
</dbReference>
<reference key="1">
    <citation type="journal article" date="2002" name="Proc. Natl. Acad. Sci. U.S.A.">
        <title>Genome sequence of Streptococcus mutans UA159, a cariogenic dental pathogen.</title>
        <authorList>
            <person name="Ajdic D.J."/>
            <person name="McShan W.M."/>
            <person name="McLaughlin R.E."/>
            <person name="Savic G."/>
            <person name="Chang J."/>
            <person name="Carson M.B."/>
            <person name="Primeaux C."/>
            <person name="Tian R."/>
            <person name="Kenton S."/>
            <person name="Jia H.G."/>
            <person name="Lin S.P."/>
            <person name="Qian Y."/>
            <person name="Li S."/>
            <person name="Zhu H."/>
            <person name="Najar F.Z."/>
            <person name="Lai H."/>
            <person name="White J."/>
            <person name="Roe B.A."/>
            <person name="Ferretti J.J."/>
        </authorList>
    </citation>
    <scope>NUCLEOTIDE SEQUENCE [LARGE SCALE GENOMIC DNA]</scope>
    <source>
        <strain>ATCC 700610 / UA159</strain>
    </source>
</reference>
<protein>
    <recommendedName>
        <fullName evidence="1">tRNA modification GTPase MnmE</fullName>
        <ecNumber evidence="1">3.6.-.-</ecNumber>
    </recommendedName>
</protein>